<proteinExistence type="inferred from homology"/>
<keyword id="KW-0030">Aminoacyl-tRNA synthetase</keyword>
<keyword id="KW-0067">ATP-binding</keyword>
<keyword id="KW-0963">Cytoplasm</keyword>
<keyword id="KW-0436">Ligase</keyword>
<keyword id="KW-0547">Nucleotide-binding</keyword>
<keyword id="KW-0648">Protein biosynthesis</keyword>
<keyword id="KW-1185">Reference proteome</keyword>
<gene>
    <name type="ordered locus">At1g29870</name>
    <name type="ORF">F1N18.9</name>
</gene>
<comment type="function">
    <text evidence="1">Catalyzes the attachment of glycine to tRNA(Gly). Is also able produce diadenosine tetraphosphate (Ap4A), a universal pleiotropic signaling molecule needed for cell regulation pathways, by direct condensation of 2 ATPs (By similarity).</text>
</comment>
<comment type="catalytic activity">
    <reaction>
        <text>tRNA(Gly) + glycine + ATP = glycyl-tRNA(Gly) + AMP + diphosphate</text>
        <dbReference type="Rhea" id="RHEA:16013"/>
        <dbReference type="Rhea" id="RHEA-COMP:9664"/>
        <dbReference type="Rhea" id="RHEA-COMP:9683"/>
        <dbReference type="ChEBI" id="CHEBI:30616"/>
        <dbReference type="ChEBI" id="CHEBI:33019"/>
        <dbReference type="ChEBI" id="CHEBI:57305"/>
        <dbReference type="ChEBI" id="CHEBI:78442"/>
        <dbReference type="ChEBI" id="CHEBI:78522"/>
        <dbReference type="ChEBI" id="CHEBI:456215"/>
        <dbReference type="EC" id="6.1.1.14"/>
    </reaction>
</comment>
<comment type="subunit">
    <text evidence="1">Homodimer.</text>
</comment>
<comment type="subcellular location">
    <subcellularLocation>
        <location evidence="3">Cytoplasm</location>
    </subcellularLocation>
</comment>
<comment type="similarity">
    <text evidence="3">Belongs to the class-II aminoacyl-tRNA synthetase family.</text>
</comment>
<comment type="sequence caution" evidence="3">
    <conflict type="erroneous gene model prediction">
        <sequence resource="EMBL-CDS" id="AAG10609"/>
    </conflict>
</comment>
<dbReference type="EC" id="6.1.1.14"/>
<dbReference type="EMBL" id="AC008030">
    <property type="protein sequence ID" value="AAG10609.1"/>
    <property type="status" value="ALT_SEQ"/>
    <property type="molecule type" value="Genomic_DNA"/>
</dbReference>
<dbReference type="EMBL" id="CP002684">
    <property type="protein sequence ID" value="AEE31144.1"/>
    <property type="molecule type" value="Genomic_DNA"/>
</dbReference>
<dbReference type="PIR" id="C86422">
    <property type="entry name" value="C86422"/>
</dbReference>
<dbReference type="RefSeq" id="NP_174280.2">
    <property type="nucleotide sequence ID" value="NM_102727.2"/>
</dbReference>
<dbReference type="SMR" id="Q9FXG2"/>
<dbReference type="BioGRID" id="25100">
    <property type="interactions" value="9"/>
</dbReference>
<dbReference type="FunCoup" id="Q9FXG2">
    <property type="interactions" value="56"/>
</dbReference>
<dbReference type="STRING" id="3702.Q9FXG2"/>
<dbReference type="iPTMnet" id="Q9FXG2"/>
<dbReference type="PaxDb" id="3702-AT1G29870.1"/>
<dbReference type="ProteomicsDB" id="233020"/>
<dbReference type="EnsemblPlants" id="AT1G29870.1">
    <property type="protein sequence ID" value="AT1G29870.1"/>
    <property type="gene ID" value="AT1G29870"/>
</dbReference>
<dbReference type="GeneID" id="839865"/>
<dbReference type="Gramene" id="AT1G29870.1">
    <property type="protein sequence ID" value="AT1G29870.1"/>
    <property type="gene ID" value="AT1G29870"/>
</dbReference>
<dbReference type="KEGG" id="ath:AT1G29870"/>
<dbReference type="Araport" id="AT1G29870"/>
<dbReference type="TAIR" id="AT1G29870"/>
<dbReference type="eggNOG" id="KOG2298">
    <property type="taxonomic scope" value="Eukaryota"/>
</dbReference>
<dbReference type="HOGENOM" id="CLU_015515_4_0_1"/>
<dbReference type="InParanoid" id="Q9FXG2"/>
<dbReference type="OMA" id="GHVKKFT"/>
<dbReference type="PRO" id="PR:Q9FXG2"/>
<dbReference type="Proteomes" id="UP000006548">
    <property type="component" value="Chromosome 1"/>
</dbReference>
<dbReference type="ExpressionAtlas" id="Q9FXG2">
    <property type="expression patterns" value="baseline and differential"/>
</dbReference>
<dbReference type="GO" id="GO:0005737">
    <property type="term" value="C:cytoplasm"/>
    <property type="evidence" value="ECO:0007669"/>
    <property type="project" value="UniProtKB-SubCell"/>
</dbReference>
<dbReference type="GO" id="GO:0005524">
    <property type="term" value="F:ATP binding"/>
    <property type="evidence" value="ECO:0007669"/>
    <property type="project" value="UniProtKB-KW"/>
</dbReference>
<dbReference type="GO" id="GO:0004820">
    <property type="term" value="F:glycine-tRNA ligase activity"/>
    <property type="evidence" value="ECO:0000250"/>
    <property type="project" value="UniProtKB"/>
</dbReference>
<dbReference type="GO" id="GO:0046983">
    <property type="term" value="F:protein dimerization activity"/>
    <property type="evidence" value="ECO:0000250"/>
    <property type="project" value="UniProtKB"/>
</dbReference>
<dbReference type="GO" id="GO:0015966">
    <property type="term" value="P:diadenosine tetraphosphate biosynthetic process"/>
    <property type="evidence" value="ECO:0000250"/>
    <property type="project" value="UniProtKB"/>
</dbReference>
<dbReference type="GO" id="GO:0006426">
    <property type="term" value="P:glycyl-tRNA aminoacylation"/>
    <property type="evidence" value="ECO:0007669"/>
    <property type="project" value="InterPro"/>
</dbReference>
<dbReference type="CDD" id="cd00774">
    <property type="entry name" value="GlyRS-like_core"/>
    <property type="match status" value="1"/>
</dbReference>
<dbReference type="FunFam" id="3.30.40.230:FF:000001">
    <property type="entry name" value="Glycine--tRNA ligase"/>
    <property type="match status" value="1"/>
</dbReference>
<dbReference type="FunFam" id="3.30.930.10:FF:000010">
    <property type="entry name" value="Glycyl-tRNA synthetase 1"/>
    <property type="match status" value="1"/>
</dbReference>
<dbReference type="Gene3D" id="3.30.40.230">
    <property type="match status" value="1"/>
</dbReference>
<dbReference type="Gene3D" id="3.30.930.10">
    <property type="entry name" value="Bira Bifunctional Protein, Domain 2"/>
    <property type="match status" value="1"/>
</dbReference>
<dbReference type="InterPro" id="IPR002314">
    <property type="entry name" value="aa-tRNA-synt_IIb"/>
</dbReference>
<dbReference type="InterPro" id="IPR006195">
    <property type="entry name" value="aa-tRNA-synth_II"/>
</dbReference>
<dbReference type="InterPro" id="IPR045864">
    <property type="entry name" value="aa-tRNA-synth_II/BPL/LPL"/>
</dbReference>
<dbReference type="InterPro" id="IPR027031">
    <property type="entry name" value="Gly-tRNA_synthase/POLG2"/>
</dbReference>
<dbReference type="InterPro" id="IPR033731">
    <property type="entry name" value="GlyRS-like_core"/>
</dbReference>
<dbReference type="InterPro" id="IPR002315">
    <property type="entry name" value="tRNA-synt_gly"/>
</dbReference>
<dbReference type="NCBIfam" id="TIGR00389">
    <property type="entry name" value="glyS_dimeric"/>
    <property type="match status" value="1"/>
</dbReference>
<dbReference type="PANTHER" id="PTHR10745:SF0">
    <property type="entry name" value="GLYCINE--TRNA LIGASE"/>
    <property type="match status" value="1"/>
</dbReference>
<dbReference type="PANTHER" id="PTHR10745">
    <property type="entry name" value="GLYCYL-TRNA SYNTHETASE/DNA POLYMERASE SUBUNIT GAMMA-2"/>
    <property type="match status" value="1"/>
</dbReference>
<dbReference type="Pfam" id="PF00587">
    <property type="entry name" value="tRNA-synt_2b"/>
    <property type="match status" value="1"/>
</dbReference>
<dbReference type="PRINTS" id="PR01043">
    <property type="entry name" value="TRNASYNTHGLY"/>
</dbReference>
<dbReference type="SUPFAM" id="SSF55681">
    <property type="entry name" value="Class II aaRS and biotin synthetases"/>
    <property type="match status" value="1"/>
</dbReference>
<dbReference type="PROSITE" id="PS50862">
    <property type="entry name" value="AA_TRNA_LIGASE_II"/>
    <property type="match status" value="1"/>
</dbReference>
<protein>
    <recommendedName>
        <fullName>Putative glycine--tRNA ligase, cytoplasmic</fullName>
        <ecNumber>6.1.1.14</ecNumber>
    </recommendedName>
    <alternativeName>
        <fullName>Diadenosine tetraphosphate synthetase</fullName>
        <shortName>AP-4-A synthetase</shortName>
    </alternativeName>
    <alternativeName>
        <fullName>Glycyl-tRNA synthetase</fullName>
        <shortName>GlyRS</shortName>
    </alternativeName>
</protein>
<sequence length="463" mass="52168">MDAPEQSFLREKSLAVEDQELAVGTLEDSHAAKPETNAAIELPNKSKPEKSAVEKDREDFREAVVKTLDRLLFVHKSFDIYHGVAGLYDFGPHGRTVELNILSLWRKCFVDEEDMMEVACTALTPEAVFNASGHVKKFTDLMVKDEVDGAFHRADHLVKSYCENRKKDPTISAENAAELDKVIAHVEDLSAEELGGVWNHCSTAPVTKNPLSHPPRPFNLMFQTSFGASGSLIGYLRPETAQGSFCNFKDYYNLNGRKLPFAVAQVGRVFRNEISPRQGLLRTREFTLAEIEHFVHPEHKSHSKFSDVAKLELLMFPREEQEKPGQFAKRLCLGEAVAKGHVNSETLGFFIGRVYLFLIRLGIDKERLRFRHHLANEMAHYATDCWDAEIECSYGWIECVGIADRSDYDLRAHSEKSGHALVAQEKLAEPIEVEKLAITPEMKELGPAFKGNQKNVVEALEVD</sequence>
<feature type="chain" id="PRO_0000073003" description="Putative glycine--tRNA ligase, cytoplasmic">
    <location>
        <begin position="1"/>
        <end position="463"/>
    </location>
</feature>
<feature type="region of interest" description="Disordered" evidence="2">
    <location>
        <begin position="25"/>
        <end position="54"/>
    </location>
</feature>
<feature type="compositionally biased region" description="Basic and acidic residues" evidence="2">
    <location>
        <begin position="44"/>
        <end position="54"/>
    </location>
</feature>
<feature type="binding site" evidence="1">
    <location>
        <position position="153"/>
    </location>
    <ligand>
        <name>substrate</name>
    </ligand>
</feature>
<feature type="binding site" evidence="1">
    <location>
        <position position="239"/>
    </location>
    <ligand>
        <name>substrate</name>
    </ligand>
</feature>
<feature type="binding site" evidence="1">
    <location>
        <begin position="271"/>
        <end position="273"/>
    </location>
    <ligand>
        <name>ATP</name>
        <dbReference type="ChEBI" id="CHEBI:30616"/>
    </ligand>
</feature>
<feature type="binding site" evidence="1">
    <location>
        <begin position="281"/>
        <end position="286"/>
    </location>
    <ligand>
        <name>ATP</name>
        <dbReference type="ChEBI" id="CHEBI:30616"/>
    </ligand>
</feature>
<feature type="binding site" evidence="1">
    <location>
        <begin position="286"/>
        <end position="290"/>
    </location>
    <ligand>
        <name>substrate</name>
    </ligand>
</feature>
<feature type="binding site" evidence="1">
    <location>
        <position position="376"/>
    </location>
    <ligand>
        <name>substrate</name>
    </ligand>
</feature>
<feature type="binding site" evidence="1">
    <location>
        <begin position="398"/>
        <end position="399"/>
    </location>
    <ligand>
        <name>ATP</name>
        <dbReference type="ChEBI" id="CHEBI:30616"/>
    </ligand>
</feature>
<organism>
    <name type="scientific">Arabidopsis thaliana</name>
    <name type="common">Mouse-ear cress</name>
    <dbReference type="NCBI Taxonomy" id="3702"/>
    <lineage>
        <taxon>Eukaryota</taxon>
        <taxon>Viridiplantae</taxon>
        <taxon>Streptophyta</taxon>
        <taxon>Embryophyta</taxon>
        <taxon>Tracheophyta</taxon>
        <taxon>Spermatophyta</taxon>
        <taxon>Magnoliopsida</taxon>
        <taxon>eudicotyledons</taxon>
        <taxon>Gunneridae</taxon>
        <taxon>Pentapetalae</taxon>
        <taxon>rosids</taxon>
        <taxon>malvids</taxon>
        <taxon>Brassicales</taxon>
        <taxon>Brassicaceae</taxon>
        <taxon>Camelineae</taxon>
        <taxon>Arabidopsis</taxon>
    </lineage>
</organism>
<accession>Q9FXG2</accession>
<accession>F4I358</accession>
<evidence type="ECO:0000250" key="1"/>
<evidence type="ECO:0000256" key="2">
    <source>
        <dbReference type="SAM" id="MobiDB-lite"/>
    </source>
</evidence>
<evidence type="ECO:0000305" key="3"/>
<reference key="1">
    <citation type="journal article" date="2000" name="Nature">
        <title>Sequence and analysis of chromosome 1 of the plant Arabidopsis thaliana.</title>
        <authorList>
            <person name="Theologis A."/>
            <person name="Ecker J.R."/>
            <person name="Palm C.J."/>
            <person name="Federspiel N.A."/>
            <person name="Kaul S."/>
            <person name="White O."/>
            <person name="Alonso J."/>
            <person name="Altafi H."/>
            <person name="Araujo R."/>
            <person name="Bowman C.L."/>
            <person name="Brooks S.Y."/>
            <person name="Buehler E."/>
            <person name="Chan A."/>
            <person name="Chao Q."/>
            <person name="Chen H."/>
            <person name="Cheuk R.F."/>
            <person name="Chin C.W."/>
            <person name="Chung M.K."/>
            <person name="Conn L."/>
            <person name="Conway A.B."/>
            <person name="Conway A.R."/>
            <person name="Creasy T.H."/>
            <person name="Dewar K."/>
            <person name="Dunn P."/>
            <person name="Etgu P."/>
            <person name="Feldblyum T.V."/>
            <person name="Feng J.-D."/>
            <person name="Fong B."/>
            <person name="Fujii C.Y."/>
            <person name="Gill J.E."/>
            <person name="Goldsmith A.D."/>
            <person name="Haas B."/>
            <person name="Hansen N.F."/>
            <person name="Hughes B."/>
            <person name="Huizar L."/>
            <person name="Hunter J.L."/>
            <person name="Jenkins J."/>
            <person name="Johnson-Hopson C."/>
            <person name="Khan S."/>
            <person name="Khaykin E."/>
            <person name="Kim C.J."/>
            <person name="Koo H.L."/>
            <person name="Kremenetskaia I."/>
            <person name="Kurtz D.B."/>
            <person name="Kwan A."/>
            <person name="Lam B."/>
            <person name="Langin-Hooper S."/>
            <person name="Lee A."/>
            <person name="Lee J.M."/>
            <person name="Lenz C.A."/>
            <person name="Li J.H."/>
            <person name="Li Y.-P."/>
            <person name="Lin X."/>
            <person name="Liu S.X."/>
            <person name="Liu Z.A."/>
            <person name="Luros J.S."/>
            <person name="Maiti R."/>
            <person name="Marziali A."/>
            <person name="Militscher J."/>
            <person name="Miranda M."/>
            <person name="Nguyen M."/>
            <person name="Nierman W.C."/>
            <person name="Osborne B.I."/>
            <person name="Pai G."/>
            <person name="Peterson J."/>
            <person name="Pham P.K."/>
            <person name="Rizzo M."/>
            <person name="Rooney T."/>
            <person name="Rowley D."/>
            <person name="Sakano H."/>
            <person name="Salzberg S.L."/>
            <person name="Schwartz J.R."/>
            <person name="Shinn P."/>
            <person name="Southwick A.M."/>
            <person name="Sun H."/>
            <person name="Tallon L.J."/>
            <person name="Tambunga G."/>
            <person name="Toriumi M.J."/>
            <person name="Town C.D."/>
            <person name="Utterback T."/>
            <person name="Van Aken S."/>
            <person name="Vaysberg M."/>
            <person name="Vysotskaia V.S."/>
            <person name="Walker M."/>
            <person name="Wu D."/>
            <person name="Yu G."/>
            <person name="Fraser C.M."/>
            <person name="Venter J.C."/>
            <person name="Davis R.W."/>
        </authorList>
    </citation>
    <scope>NUCLEOTIDE SEQUENCE [LARGE SCALE GENOMIC DNA]</scope>
    <source>
        <strain>cv. Columbia</strain>
    </source>
</reference>
<reference key="2">
    <citation type="journal article" date="2017" name="Plant J.">
        <title>Araport11: a complete reannotation of the Arabidopsis thaliana reference genome.</title>
        <authorList>
            <person name="Cheng C.Y."/>
            <person name="Krishnakumar V."/>
            <person name="Chan A.P."/>
            <person name="Thibaud-Nissen F."/>
            <person name="Schobel S."/>
            <person name="Town C.D."/>
        </authorList>
    </citation>
    <scope>GENOME REANNOTATION</scope>
    <source>
        <strain>cv. Columbia</strain>
    </source>
</reference>
<name>SYGC_ARATH</name>